<comment type="function">
    <text evidence="6 7 8">Mitochondrial peptide chain release factor that directs the termination of translation in response to the peptide chain non-canonical stop codons AGG and AGA (PubMed:36302763, PubMed:36596788, PubMed:37141370). Non-canonical termination codons AGG and AGA are found at the end of MT-CO1/COX1 and MT-ND6/ND6 open reading frames, respectively (PubMed:37141370). Recognizes non-canonical stop codons via a network of interactions between the codon, MTRF1 and the ribosomal RNA (rRNA): in contrast to other translation release factors, which identify the codon in the A-site via direct interactions of amino acid side chains with the bases, MTRF1 repositions the first 2 bases of the stop codon to use an intricate network of interactions that includes residues of the release factor, the rRNA of the small ribosomal subunit, as well as neighboring bases of the mRNA (PubMed:37141370).</text>
</comment>
<comment type="subcellular location">
    <subcellularLocation>
        <location evidence="4 8">Mitochondrion</location>
    </subcellularLocation>
</comment>
<comment type="alternative products">
    <event type="alternative splicing"/>
    <isoform>
        <id>O75570-1</id>
        <name>1</name>
        <sequence type="displayed"/>
    </isoform>
    <isoform>
        <id>O75570-2</id>
        <name>2</name>
        <sequence type="described" ref="VSP_055858 VSP_055859"/>
    </isoform>
</comment>
<comment type="domain">
    <text evidence="2">The GGQ domain interacts with the peptidyltransferase center (PTC) of the large ribosomal subunit to trigger nascent chain hydrolysis.</text>
</comment>
<comment type="PTM">
    <text evidence="5">Methylation of glutamine in the GGQ triplet by HEMK1 is conserved from bacteria to mammals.</text>
</comment>
<comment type="similarity">
    <text evidence="13">Belongs to the prokaryotic/mitochondrial release factor family.</text>
</comment>
<comment type="caution">
    <text evidence="6 7 8 14">Was initially thought to not act as a peptide chain release factor because of a sequence insertion in the stop codon-recognition domain that would prevent interactions with the mRNA (PubMed:22569235). However, it was later shown to specifically direct the termination of translation in response to non-canonical termination stop codons AGG and AGA (PubMed:36302763, PubMed:36596788, PubMed:37141370).</text>
</comment>
<reference key="1">
    <citation type="journal article" date="1998" name="Biochim. Biophys. Acta">
        <title>Identification and cloning of human mitochondrial translational release factor 1 and the ribosome recycling factor.</title>
        <authorList>
            <person name="Zhang Y."/>
            <person name="Spremulli L.L."/>
        </authorList>
    </citation>
    <scope>NUCLEOTIDE SEQUENCE [MRNA] (ISOFORM 1)</scope>
</reference>
<reference key="2">
    <citation type="journal article" date="2004" name="Nat. Genet.">
        <title>Complete sequencing and characterization of 21,243 full-length human cDNAs.</title>
        <authorList>
            <person name="Ota T."/>
            <person name="Suzuki Y."/>
            <person name="Nishikawa T."/>
            <person name="Otsuki T."/>
            <person name="Sugiyama T."/>
            <person name="Irie R."/>
            <person name="Wakamatsu A."/>
            <person name="Hayashi K."/>
            <person name="Sato H."/>
            <person name="Nagai K."/>
            <person name="Kimura K."/>
            <person name="Makita H."/>
            <person name="Sekine M."/>
            <person name="Obayashi M."/>
            <person name="Nishi T."/>
            <person name="Shibahara T."/>
            <person name="Tanaka T."/>
            <person name="Ishii S."/>
            <person name="Yamamoto J."/>
            <person name="Saito K."/>
            <person name="Kawai Y."/>
            <person name="Isono Y."/>
            <person name="Nakamura Y."/>
            <person name="Nagahari K."/>
            <person name="Murakami K."/>
            <person name="Yasuda T."/>
            <person name="Iwayanagi T."/>
            <person name="Wagatsuma M."/>
            <person name="Shiratori A."/>
            <person name="Sudo H."/>
            <person name="Hosoiri T."/>
            <person name="Kaku Y."/>
            <person name="Kodaira H."/>
            <person name="Kondo H."/>
            <person name="Sugawara M."/>
            <person name="Takahashi M."/>
            <person name="Kanda K."/>
            <person name="Yokoi T."/>
            <person name="Furuya T."/>
            <person name="Kikkawa E."/>
            <person name="Omura Y."/>
            <person name="Abe K."/>
            <person name="Kamihara K."/>
            <person name="Katsuta N."/>
            <person name="Sato K."/>
            <person name="Tanikawa M."/>
            <person name="Yamazaki M."/>
            <person name="Ninomiya K."/>
            <person name="Ishibashi T."/>
            <person name="Yamashita H."/>
            <person name="Murakawa K."/>
            <person name="Fujimori K."/>
            <person name="Tanai H."/>
            <person name="Kimata M."/>
            <person name="Watanabe M."/>
            <person name="Hiraoka S."/>
            <person name="Chiba Y."/>
            <person name="Ishida S."/>
            <person name="Ono Y."/>
            <person name="Takiguchi S."/>
            <person name="Watanabe S."/>
            <person name="Yosida M."/>
            <person name="Hotuta T."/>
            <person name="Kusano J."/>
            <person name="Kanehori K."/>
            <person name="Takahashi-Fujii A."/>
            <person name="Hara H."/>
            <person name="Tanase T.-O."/>
            <person name="Nomura Y."/>
            <person name="Togiya S."/>
            <person name="Komai F."/>
            <person name="Hara R."/>
            <person name="Takeuchi K."/>
            <person name="Arita M."/>
            <person name="Imose N."/>
            <person name="Musashino K."/>
            <person name="Yuuki H."/>
            <person name="Oshima A."/>
            <person name="Sasaki N."/>
            <person name="Aotsuka S."/>
            <person name="Yoshikawa Y."/>
            <person name="Matsunawa H."/>
            <person name="Ichihara T."/>
            <person name="Shiohata N."/>
            <person name="Sano S."/>
            <person name="Moriya S."/>
            <person name="Momiyama H."/>
            <person name="Satoh N."/>
            <person name="Takami S."/>
            <person name="Terashima Y."/>
            <person name="Suzuki O."/>
            <person name="Nakagawa S."/>
            <person name="Senoh A."/>
            <person name="Mizoguchi H."/>
            <person name="Goto Y."/>
            <person name="Shimizu F."/>
            <person name="Wakebe H."/>
            <person name="Hishigaki H."/>
            <person name="Watanabe T."/>
            <person name="Sugiyama A."/>
            <person name="Takemoto M."/>
            <person name="Kawakami B."/>
            <person name="Yamazaki M."/>
            <person name="Watanabe K."/>
            <person name="Kumagai A."/>
            <person name="Itakura S."/>
            <person name="Fukuzumi Y."/>
            <person name="Fujimori Y."/>
            <person name="Komiyama M."/>
            <person name="Tashiro H."/>
            <person name="Tanigami A."/>
            <person name="Fujiwara T."/>
            <person name="Ono T."/>
            <person name="Yamada K."/>
            <person name="Fujii Y."/>
            <person name="Ozaki K."/>
            <person name="Hirao M."/>
            <person name="Ohmori Y."/>
            <person name="Kawabata A."/>
            <person name="Hikiji T."/>
            <person name="Kobatake N."/>
            <person name="Inagaki H."/>
            <person name="Ikema Y."/>
            <person name="Okamoto S."/>
            <person name="Okitani R."/>
            <person name="Kawakami T."/>
            <person name="Noguchi S."/>
            <person name="Itoh T."/>
            <person name="Shigeta K."/>
            <person name="Senba T."/>
            <person name="Matsumura K."/>
            <person name="Nakajima Y."/>
            <person name="Mizuno T."/>
            <person name="Morinaga M."/>
            <person name="Sasaki M."/>
            <person name="Togashi T."/>
            <person name="Oyama M."/>
            <person name="Hata H."/>
            <person name="Watanabe M."/>
            <person name="Komatsu T."/>
            <person name="Mizushima-Sugano J."/>
            <person name="Satoh T."/>
            <person name="Shirai Y."/>
            <person name="Takahashi Y."/>
            <person name="Nakagawa K."/>
            <person name="Okumura K."/>
            <person name="Nagase T."/>
            <person name="Nomura N."/>
            <person name="Kikuchi H."/>
            <person name="Masuho Y."/>
            <person name="Yamashita R."/>
            <person name="Nakai K."/>
            <person name="Yada T."/>
            <person name="Nakamura Y."/>
            <person name="Ohara O."/>
            <person name="Isogai T."/>
            <person name="Sugano S."/>
        </authorList>
    </citation>
    <scope>NUCLEOTIDE SEQUENCE [LARGE SCALE MRNA] (ISOFORM 2)</scope>
    <source>
        <tissue>Amygdala</tissue>
    </source>
</reference>
<reference key="3">
    <citation type="journal article" date="2004" name="Nature">
        <title>The DNA sequence and analysis of human chromosome 13.</title>
        <authorList>
            <person name="Dunham A."/>
            <person name="Matthews L.H."/>
            <person name="Burton J."/>
            <person name="Ashurst J.L."/>
            <person name="Howe K.L."/>
            <person name="Ashcroft K.J."/>
            <person name="Beare D.M."/>
            <person name="Burford D.C."/>
            <person name="Hunt S.E."/>
            <person name="Griffiths-Jones S."/>
            <person name="Jones M.C."/>
            <person name="Keenan S.J."/>
            <person name="Oliver K."/>
            <person name="Scott C.E."/>
            <person name="Ainscough R."/>
            <person name="Almeida J.P."/>
            <person name="Ambrose K.D."/>
            <person name="Andrews D.T."/>
            <person name="Ashwell R.I.S."/>
            <person name="Babbage A.K."/>
            <person name="Bagguley C.L."/>
            <person name="Bailey J."/>
            <person name="Bannerjee R."/>
            <person name="Barlow K.F."/>
            <person name="Bates K."/>
            <person name="Beasley H."/>
            <person name="Bird C.P."/>
            <person name="Bray-Allen S."/>
            <person name="Brown A.J."/>
            <person name="Brown J.Y."/>
            <person name="Burrill W."/>
            <person name="Carder C."/>
            <person name="Carter N.P."/>
            <person name="Chapman J.C."/>
            <person name="Clamp M.E."/>
            <person name="Clark S.Y."/>
            <person name="Clarke G."/>
            <person name="Clee C.M."/>
            <person name="Clegg S.C."/>
            <person name="Cobley V."/>
            <person name="Collins J.E."/>
            <person name="Corby N."/>
            <person name="Coville G.J."/>
            <person name="Deloukas P."/>
            <person name="Dhami P."/>
            <person name="Dunham I."/>
            <person name="Dunn M."/>
            <person name="Earthrowl M.E."/>
            <person name="Ellington A.G."/>
            <person name="Faulkner L."/>
            <person name="Frankish A.G."/>
            <person name="Frankland J."/>
            <person name="French L."/>
            <person name="Garner P."/>
            <person name="Garnett J."/>
            <person name="Gilbert J.G.R."/>
            <person name="Gilson C.J."/>
            <person name="Ghori J."/>
            <person name="Grafham D.V."/>
            <person name="Gribble S.M."/>
            <person name="Griffiths C."/>
            <person name="Hall R.E."/>
            <person name="Hammond S."/>
            <person name="Harley J.L."/>
            <person name="Hart E.A."/>
            <person name="Heath P.D."/>
            <person name="Howden P.J."/>
            <person name="Huckle E.J."/>
            <person name="Hunt P.J."/>
            <person name="Hunt A.R."/>
            <person name="Johnson C."/>
            <person name="Johnson D."/>
            <person name="Kay M."/>
            <person name="Kimberley A.M."/>
            <person name="King A."/>
            <person name="Laird G.K."/>
            <person name="Langford C.J."/>
            <person name="Lawlor S."/>
            <person name="Leongamornlert D.A."/>
            <person name="Lloyd D.M."/>
            <person name="Lloyd C."/>
            <person name="Loveland J.E."/>
            <person name="Lovell J."/>
            <person name="Martin S."/>
            <person name="Mashreghi-Mohammadi M."/>
            <person name="McLaren S.J."/>
            <person name="McMurray A."/>
            <person name="Milne S."/>
            <person name="Moore M.J.F."/>
            <person name="Nickerson T."/>
            <person name="Palmer S.A."/>
            <person name="Pearce A.V."/>
            <person name="Peck A.I."/>
            <person name="Pelan S."/>
            <person name="Phillimore B."/>
            <person name="Porter K.M."/>
            <person name="Rice C.M."/>
            <person name="Searle S."/>
            <person name="Sehra H.K."/>
            <person name="Shownkeen R."/>
            <person name="Skuce C.D."/>
            <person name="Smith M."/>
            <person name="Steward C.A."/>
            <person name="Sycamore N."/>
            <person name="Tester J."/>
            <person name="Thomas D.W."/>
            <person name="Tracey A."/>
            <person name="Tromans A."/>
            <person name="Tubby B."/>
            <person name="Wall M."/>
            <person name="Wallis J.M."/>
            <person name="West A.P."/>
            <person name="Whitehead S.L."/>
            <person name="Willey D.L."/>
            <person name="Wilming L."/>
            <person name="Wray P.W."/>
            <person name="Wright M.W."/>
            <person name="Young L."/>
            <person name="Coulson A."/>
            <person name="Durbin R.M."/>
            <person name="Hubbard T."/>
            <person name="Sulston J.E."/>
            <person name="Beck S."/>
            <person name="Bentley D.R."/>
            <person name="Rogers J."/>
            <person name="Ross M.T."/>
        </authorList>
    </citation>
    <scope>NUCLEOTIDE SEQUENCE [LARGE SCALE GENOMIC DNA]</scope>
</reference>
<reference key="4">
    <citation type="journal article" date="2004" name="Genome Res.">
        <title>The status, quality, and expansion of the NIH full-length cDNA project: the Mammalian Gene Collection (MGC).</title>
        <authorList>
            <consortium name="The MGC Project Team"/>
        </authorList>
    </citation>
    <scope>NUCLEOTIDE SEQUENCE [LARGE SCALE MRNA] (ISOFORM 1)</scope>
    <source>
        <tissue>Brain</tissue>
    </source>
</reference>
<reference key="5">
    <citation type="journal article" date="2007" name="Mol. Cell">
        <title>mtRF1a is a human mitochondrial translation release factor decoding the major termination codons UAA and UAG.</title>
        <authorList>
            <person name="Soleimanpour-Lichaei H.R."/>
            <person name="Kuehl I."/>
            <person name="Gaisne M."/>
            <person name="Passos J.F."/>
            <person name="Wydro M."/>
            <person name="Rorbach J."/>
            <person name="Temperley R."/>
            <person name="Bonnefoy N."/>
            <person name="Tate W."/>
            <person name="Lightowlers R."/>
            <person name="Chrzanowska-Lightowlers Z."/>
        </authorList>
    </citation>
    <scope>PROBABLE FUNCTION AS A RELEASE FACTOR</scope>
    <scope>SUBCELLULAR LOCATION</scope>
</reference>
<reference key="6">
    <citation type="journal article" date="2012" name="Biol. Direct">
        <title>Structure based hypothesis of a mitochondrial ribosome rescue mechanism.</title>
        <authorList>
            <person name="Huynen M.A."/>
            <person name="Duarte I."/>
            <person name="Chrzanowska-Lightowlers Z.M."/>
            <person name="Nabuurs S.B."/>
        </authorList>
    </citation>
    <scope>CAUTION</scope>
</reference>
<reference key="7">
    <citation type="journal article" date="2022" name="Nat. Commun.">
        <title>Human mtRF1 terminates COX1 translation and its ablation induces mitochondrial ribosome-associated quality control.</title>
        <authorList>
            <person name="Nadler F."/>
            <person name="Lavdovskaia E."/>
            <person name="Krempler A."/>
            <person name="Cruz-Zaragoza L.D."/>
            <person name="Dennerlein S."/>
            <person name="Richter-Dennerlein R."/>
        </authorList>
    </citation>
    <scope>FUNCTION</scope>
</reference>
<reference key="8">
    <citation type="journal article" date="2022" name="Sci. Rep.">
        <title>Mammalian HEMK1 methylates glutamine residue of the GGQ motif of mitochondrial release factors.</title>
        <authorList>
            <person name="Fang Q."/>
            <person name="Kimura Y."/>
            <person name="Shimazu T."/>
            <person name="Suzuki T."/>
            <person name="Yamada A."/>
            <person name="Dohmae N."/>
            <person name="Iwasaki S."/>
            <person name="Shinkai Y."/>
        </authorList>
    </citation>
    <scope>METHYLATION AT GLN-313</scope>
</reference>
<reference key="9">
    <citation type="journal article" date="2023" name="Nat. Commun.">
        <title>Human mitochondria require mtRF1 for translation termination at non-canonical stop codons.</title>
        <authorList>
            <person name="Krueger A."/>
            <person name="Remes C."/>
            <person name="Shiriaev D.I."/>
            <person name="Liu Y."/>
            <person name="Spaahr H."/>
            <person name="Wibom R."/>
            <person name="Atanassov I."/>
            <person name="Nguyen M.D."/>
            <person name="Cooperman B.S."/>
            <person name="Rorbach J."/>
        </authorList>
    </citation>
    <scope>FUNCTION</scope>
    <scope>MUTAGENESIS OF 311-GLY-GLY-312</scope>
</reference>
<reference evidence="16 17" key="10">
    <citation type="journal article" date="2023" name="Science">
        <title>Molecular basis of translation termination at noncanonical stop codons in human mitochondria.</title>
        <authorList>
            <person name="Saurer M."/>
            <person name="Leibundgut M."/>
            <person name="Nadimpalli H.P."/>
            <person name="Scaiola A."/>
            <person name="Schoenhut T."/>
            <person name="Lee R.G."/>
            <person name="Siira S.J."/>
            <person name="Rackham O."/>
            <person name="Dreos R."/>
            <person name="Lenarcic T."/>
            <person name="Kummer E."/>
            <person name="Gatfield D."/>
            <person name="Filipovska A."/>
            <person name="Ban N."/>
        </authorList>
    </citation>
    <scope>STRUCTURE BY ELECTRON MICROSCOPY (3.5 ANGSTROMS) IN COMPLEX WITH MITOCHONDRIAL RIBOSOME</scope>
    <scope>FUNCTION</scope>
    <scope>SUBCELLULAR LOCATION</scope>
</reference>
<keyword id="KW-0002">3D-structure</keyword>
<keyword id="KW-0025">Alternative splicing</keyword>
<keyword id="KW-0488">Methylation</keyword>
<keyword id="KW-0496">Mitochondrion</keyword>
<keyword id="KW-0648">Protein biosynthesis</keyword>
<keyword id="KW-1267">Proteomics identification</keyword>
<keyword id="KW-1185">Reference proteome</keyword>
<keyword id="KW-0809">Transit peptide</keyword>
<proteinExistence type="evidence at protein level"/>
<organism>
    <name type="scientific">Homo sapiens</name>
    <name type="common">Human</name>
    <dbReference type="NCBI Taxonomy" id="9606"/>
    <lineage>
        <taxon>Eukaryota</taxon>
        <taxon>Metazoa</taxon>
        <taxon>Chordata</taxon>
        <taxon>Craniata</taxon>
        <taxon>Vertebrata</taxon>
        <taxon>Euteleostomi</taxon>
        <taxon>Mammalia</taxon>
        <taxon>Eutheria</taxon>
        <taxon>Euarchontoglires</taxon>
        <taxon>Primates</taxon>
        <taxon>Haplorrhini</taxon>
        <taxon>Catarrhini</taxon>
        <taxon>Hominidae</taxon>
        <taxon>Homo</taxon>
    </lineage>
</organism>
<evidence type="ECO:0000250" key="1">
    <source>
        <dbReference type="UniProtKB" id="Q80VP5"/>
    </source>
</evidence>
<evidence type="ECO:0000250" key="2">
    <source>
        <dbReference type="UniProtKB" id="Q9H3J6"/>
    </source>
</evidence>
<evidence type="ECO:0000255" key="3"/>
<evidence type="ECO:0000269" key="4">
    <source>
    </source>
</evidence>
<evidence type="ECO:0000269" key="5">
    <source>
    </source>
</evidence>
<evidence type="ECO:0000269" key="6">
    <source>
    </source>
</evidence>
<evidence type="ECO:0000269" key="7">
    <source>
    </source>
</evidence>
<evidence type="ECO:0000269" key="8">
    <source>
    </source>
</evidence>
<evidence type="ECO:0000303" key="9">
    <source>
    </source>
</evidence>
<evidence type="ECO:0000303" key="10">
    <source>
    </source>
</evidence>
<evidence type="ECO:0000303" key="11">
    <source>
    </source>
</evidence>
<evidence type="ECO:0000303" key="12">
    <source>
    </source>
</evidence>
<evidence type="ECO:0000305" key="13"/>
<evidence type="ECO:0000305" key="14">
    <source>
    </source>
</evidence>
<evidence type="ECO:0000312" key="15">
    <source>
        <dbReference type="HGNC" id="HGNC:7469"/>
    </source>
</evidence>
<evidence type="ECO:0007744" key="16">
    <source>
        <dbReference type="PDB" id="8OIN"/>
    </source>
</evidence>
<evidence type="ECO:0007744" key="17">
    <source>
        <dbReference type="PDB" id="8OIP"/>
    </source>
</evidence>
<feature type="transit peptide" description="Mitochondrion" evidence="3">
    <location>
        <begin position="1"/>
        <end position="61"/>
    </location>
</feature>
<feature type="chain" id="PRO_0000030333" description="Peptide chain release factor 1, mitochondrial">
    <location>
        <begin position="62"/>
        <end position="445"/>
    </location>
</feature>
<feature type="region of interest" description="GGQ domain" evidence="1">
    <location>
        <begin position="297"/>
        <end position="361"/>
    </location>
</feature>
<feature type="short sequence motif" description="GGQ" evidence="8">
    <location>
        <begin position="311"/>
        <end position="313"/>
    </location>
</feature>
<feature type="modified residue" description="N5-methylglutamine" evidence="5">
    <location>
        <position position="313"/>
    </location>
</feature>
<feature type="splice variant" id="VSP_055858" description="In isoform 2." evidence="9">
    <original>M</original>
    <variation>MGNGEVVLFSDAEM</variation>
    <location>
        <position position="1"/>
    </location>
</feature>
<feature type="splice variant" id="VSP_055859" description="In isoform 2." evidence="9">
    <original>EFLCGGKGLDQLIQRLLQSADEEAIAELLDEHLKSAK</original>
    <variation>AQSHSTGGSRDPAHSTFLSLDSVRSPGILIMTSSVRNFYVVGRAWIS</variation>
    <location>
        <begin position="409"/>
        <end position="445"/>
    </location>
</feature>
<feature type="sequence variant" id="VAR_024603" description="In dbSNP:rs9532758.">
    <original>N</original>
    <variation>S</variation>
    <location>
        <position position="2"/>
    </location>
</feature>
<feature type="sequence variant" id="VAR_034447" description="In dbSNP:rs9566725.">
    <original>L</original>
    <variation>V</variation>
    <location>
        <position position="324"/>
    </location>
</feature>
<feature type="sequence variant" id="VAR_051789" description="In dbSNP:rs9315812.">
    <original>I</original>
    <variation>V</variation>
    <location>
        <position position="407"/>
    </location>
</feature>
<feature type="mutagenesis site" description="Impaired mitochondrial peptide chain release factor activity." evidence="7">
    <original>GG</original>
    <variation>AA</variation>
    <location>
        <begin position="311"/>
        <end position="312"/>
    </location>
</feature>
<feature type="sequence conflict" description="In Ref. 1; AAD12759." evidence="13" ref="1">
    <original>H</original>
    <variation>L</variation>
    <location>
        <position position="63"/>
    </location>
</feature>
<feature type="sequence conflict" description="In Ref. 1; AAD12759." evidence="13" ref="1">
    <original>K</original>
    <variation>N</variation>
    <location>
        <position position="71"/>
    </location>
</feature>
<feature type="sequence conflict" description="In Ref. 1; AAD12759." evidence="13" ref="1">
    <original>N</original>
    <variation>S</variation>
    <location>
        <position position="102"/>
    </location>
</feature>
<feature type="sequence conflict" description="In Ref. 1; AAD12759." evidence="13" ref="1">
    <original>I</original>
    <variation>T</variation>
    <location>
        <position position="123"/>
    </location>
</feature>
<feature type="sequence conflict" description="In Ref. 1; AAD12759." evidence="13" ref="1">
    <original>E</original>
    <variation>G</variation>
    <location>
        <position position="134"/>
    </location>
</feature>
<feature type="sequence conflict" description="In Ref. 1; AAD12759." evidence="13" ref="1">
    <original>Q</original>
    <variation>R</variation>
    <location>
        <position position="143"/>
    </location>
</feature>
<feature type="sequence conflict" description="In Ref. 1; AAD12759." evidence="13" ref="1">
    <original>Q</original>
    <variation>L</variation>
    <location>
        <position position="149"/>
    </location>
</feature>
<feature type="sequence conflict" description="In Ref. 1; AAD12759." evidence="13" ref="1">
    <original>L</original>
    <variation>P</variation>
    <location>
        <position position="224"/>
    </location>
</feature>
<name>RF1M_HUMAN</name>
<accession>O75570</accession>
<accession>B4DG01</accession>
<accession>Q5T6Y5</accession>
<accession>Q8IUQ6</accession>
<gene>
    <name evidence="10 11 12 15" type="primary">MTRF1</name>
</gene>
<sequence>MNRHLCVWLFRHPSLNGYLQCHIQLHSHQFRQIHLDTRLQVFRQNRNCILHLLSKNWSRRYCHQDTKMLWKHKALQKYMENLSKEYQTLEQCLQHIPVNEENRRSLNRRHAELAPLAAIYQEIQETEQAIEELESMCKSLNKQDEKQLQELALEERQTIDQKINMLYNELFQSLVPKEKYDKNDVILEVTAGRTTGGDICQQFTREIFDMYQNYSCYKHWQFELLNYTPADYGGLHHAAARISGDGVYKHLKYEGGIHRVQRIPEVGLSSRMQRIHTGTMSVIVLPQPDEVDVKLDPKDLRIDTFRAKGAGGQHVNKTDSAVRLVHIPTGLVVECQQERSQIKNKEIAFRVLRARLYQQIIEKDKRQQQSARKLQVGTRAQSERIRTYNFTQDRVSDHRIAYEVRDIKEFLCGGKGLDQLIQRLLQSADEEAIAELLDEHLKSAK</sequence>
<dbReference type="EMBL" id="AF072934">
    <property type="protein sequence ID" value="AAD12759.1"/>
    <property type="molecule type" value="mRNA"/>
</dbReference>
<dbReference type="EMBL" id="AK294343">
    <property type="protein sequence ID" value="BAG57612.1"/>
    <property type="molecule type" value="mRNA"/>
</dbReference>
<dbReference type="EMBL" id="AL354696">
    <property type="status" value="NOT_ANNOTATED_CDS"/>
    <property type="molecule type" value="Genomic_DNA"/>
</dbReference>
<dbReference type="EMBL" id="BC042196">
    <property type="protein sequence ID" value="AAH42196.1"/>
    <property type="molecule type" value="mRNA"/>
</dbReference>
<dbReference type="CCDS" id="CCDS9378.1">
    <molecule id="O75570-1"/>
</dbReference>
<dbReference type="RefSeq" id="NP_001341002.1">
    <molecule id="O75570-1"/>
    <property type="nucleotide sequence ID" value="NM_001354073.1"/>
</dbReference>
<dbReference type="RefSeq" id="NP_001341003.1">
    <molecule id="O75570-1"/>
    <property type="nucleotide sequence ID" value="NM_001354074.1"/>
</dbReference>
<dbReference type="RefSeq" id="NP_001341005.1">
    <molecule id="O75570-1"/>
    <property type="nucleotide sequence ID" value="NM_001354076.1"/>
</dbReference>
<dbReference type="RefSeq" id="NP_004285.2">
    <molecule id="O75570-1"/>
    <property type="nucleotide sequence ID" value="NM_004294.2"/>
</dbReference>
<dbReference type="RefSeq" id="XP_005266656.1">
    <property type="nucleotide sequence ID" value="XM_005266599.2"/>
</dbReference>
<dbReference type="RefSeq" id="XP_006719960.1">
    <property type="nucleotide sequence ID" value="XM_006719897.2"/>
</dbReference>
<dbReference type="RefSeq" id="XP_006719961.1">
    <property type="nucleotide sequence ID" value="XM_006719898.2"/>
</dbReference>
<dbReference type="RefSeq" id="XP_006719963.1">
    <property type="nucleotide sequence ID" value="XM_006719900.2"/>
</dbReference>
<dbReference type="RefSeq" id="XP_011533620.1">
    <property type="nucleotide sequence ID" value="XM_011535318.2"/>
</dbReference>
<dbReference type="RefSeq" id="XP_011533622.1">
    <property type="nucleotide sequence ID" value="XM_011535320.2"/>
</dbReference>
<dbReference type="RefSeq" id="XP_011533623.1">
    <property type="nucleotide sequence ID" value="XM_011535321.2"/>
</dbReference>
<dbReference type="RefSeq" id="XP_011533625.1">
    <property type="nucleotide sequence ID" value="XM_011535323.2"/>
</dbReference>
<dbReference type="RefSeq" id="XP_011533627.1">
    <property type="nucleotide sequence ID" value="XM_011535325.2"/>
</dbReference>
<dbReference type="RefSeq" id="XP_016876351.1">
    <property type="nucleotide sequence ID" value="XM_017020862.1"/>
</dbReference>
<dbReference type="RefSeq" id="XP_016876352.1">
    <property type="nucleotide sequence ID" value="XM_017020863.1"/>
</dbReference>
<dbReference type="RefSeq" id="XP_016876353.1">
    <property type="nucleotide sequence ID" value="XM_017020864.1"/>
</dbReference>
<dbReference type="RefSeq" id="XP_016876354.1">
    <property type="nucleotide sequence ID" value="XM_017020865.1"/>
</dbReference>
<dbReference type="RefSeq" id="XP_016876355.1">
    <molecule id="O75570-1"/>
    <property type="nucleotide sequence ID" value="XM_017020866.3"/>
</dbReference>
<dbReference type="RefSeq" id="XP_016876356.1">
    <property type="nucleotide sequence ID" value="XM_017020867.1"/>
</dbReference>
<dbReference type="RefSeq" id="XP_016876357.1">
    <property type="nucleotide sequence ID" value="XM_017020868.1"/>
</dbReference>
<dbReference type="RefSeq" id="XP_016876358.1">
    <property type="nucleotide sequence ID" value="XM_017020869.1"/>
</dbReference>
<dbReference type="RefSeq" id="XP_016876362.1">
    <property type="nucleotide sequence ID" value="XM_017020873.1"/>
</dbReference>
<dbReference type="RefSeq" id="XP_016876363.1">
    <property type="nucleotide sequence ID" value="XM_017020874.1"/>
</dbReference>
<dbReference type="RefSeq" id="XP_016876364.1">
    <property type="nucleotide sequence ID" value="XM_017020875.1"/>
</dbReference>
<dbReference type="RefSeq" id="XP_024305208.1">
    <molecule id="O75570-1"/>
    <property type="nucleotide sequence ID" value="XM_024449440.2"/>
</dbReference>
<dbReference type="RefSeq" id="XP_024305209.1">
    <molecule id="O75570-1"/>
    <property type="nucleotide sequence ID" value="XM_024449441.2"/>
</dbReference>
<dbReference type="RefSeq" id="XP_024305210.1">
    <molecule id="O75570-1"/>
    <property type="nucleotide sequence ID" value="XM_024449442.2"/>
</dbReference>
<dbReference type="RefSeq" id="XP_047286745.1">
    <molecule id="O75570-1"/>
    <property type="nucleotide sequence ID" value="XM_047430789.1"/>
</dbReference>
<dbReference type="RefSeq" id="XP_047286746.1">
    <molecule id="O75570-1"/>
    <property type="nucleotide sequence ID" value="XM_047430790.1"/>
</dbReference>
<dbReference type="RefSeq" id="XP_047286747.1">
    <molecule id="O75570-1"/>
    <property type="nucleotide sequence ID" value="XM_047430791.1"/>
</dbReference>
<dbReference type="RefSeq" id="XP_047286748.1">
    <molecule id="O75570-1"/>
    <property type="nucleotide sequence ID" value="XM_047430792.1"/>
</dbReference>
<dbReference type="RefSeq" id="XP_047286749.1">
    <molecule id="O75570-1"/>
    <property type="nucleotide sequence ID" value="XM_047430793.1"/>
</dbReference>
<dbReference type="RefSeq" id="XP_047286750.1">
    <molecule id="O75570-1"/>
    <property type="nucleotide sequence ID" value="XM_047430794.1"/>
</dbReference>
<dbReference type="RefSeq" id="XP_047286751.1">
    <molecule id="O75570-1"/>
    <property type="nucleotide sequence ID" value="XM_047430795.1"/>
</dbReference>
<dbReference type="RefSeq" id="XP_047286752.1">
    <molecule id="O75570-1"/>
    <property type="nucleotide sequence ID" value="XM_047430796.1"/>
</dbReference>
<dbReference type="RefSeq" id="XP_047286753.1">
    <molecule id="O75570-1"/>
    <property type="nucleotide sequence ID" value="XM_047430797.1"/>
</dbReference>
<dbReference type="RefSeq" id="XP_047286754.1">
    <molecule id="O75570-1"/>
    <property type="nucleotide sequence ID" value="XM_047430798.1"/>
</dbReference>
<dbReference type="RefSeq" id="XP_054231188.1">
    <molecule id="O75570-1"/>
    <property type="nucleotide sequence ID" value="XM_054375213.1"/>
</dbReference>
<dbReference type="RefSeq" id="XP_054231189.1">
    <molecule id="O75570-1"/>
    <property type="nucleotide sequence ID" value="XM_054375214.1"/>
</dbReference>
<dbReference type="RefSeq" id="XP_054231190.1">
    <molecule id="O75570-1"/>
    <property type="nucleotide sequence ID" value="XM_054375215.1"/>
</dbReference>
<dbReference type="RefSeq" id="XP_054231191.1">
    <molecule id="O75570-1"/>
    <property type="nucleotide sequence ID" value="XM_054375216.1"/>
</dbReference>
<dbReference type="RefSeq" id="XP_054231192.1">
    <molecule id="O75570-1"/>
    <property type="nucleotide sequence ID" value="XM_054375217.1"/>
</dbReference>
<dbReference type="RefSeq" id="XP_054231193.1">
    <molecule id="O75570-1"/>
    <property type="nucleotide sequence ID" value="XM_054375218.1"/>
</dbReference>
<dbReference type="RefSeq" id="XP_054231194.1">
    <molecule id="O75570-1"/>
    <property type="nucleotide sequence ID" value="XM_054375219.1"/>
</dbReference>
<dbReference type="RefSeq" id="XP_054231196.1">
    <molecule id="O75570-1"/>
    <property type="nucleotide sequence ID" value="XM_054375221.1"/>
</dbReference>
<dbReference type="PDB" id="8OIN">
    <property type="method" value="EM"/>
    <property type="resolution" value="3.60 A"/>
    <property type="chains" value="Aa=1-445"/>
</dbReference>
<dbReference type="PDB" id="8OIP">
    <property type="method" value="EM"/>
    <property type="resolution" value="3.60 A"/>
    <property type="chains" value="Aa=1-445"/>
</dbReference>
<dbReference type="PDB" id="8OIQ">
    <property type="method" value="EM"/>
    <property type="resolution" value="3.50 A"/>
    <property type="chains" value="Aa=1-445"/>
</dbReference>
<dbReference type="PDB" id="8OIR">
    <property type="method" value="EM"/>
    <property type="resolution" value="3.10 A"/>
    <property type="chains" value="Aa=1-445"/>
</dbReference>
<dbReference type="PDB" id="8OIS">
    <property type="method" value="EM"/>
    <property type="resolution" value="3.00 A"/>
    <property type="chains" value="Aa=1-445"/>
</dbReference>
<dbReference type="PDB" id="8OIT">
    <property type="method" value="EM"/>
    <property type="resolution" value="2.90 A"/>
    <property type="chains" value="Aa=1-445"/>
</dbReference>
<dbReference type="PDBsum" id="8OIN"/>
<dbReference type="PDBsum" id="8OIP"/>
<dbReference type="PDBsum" id="8OIQ"/>
<dbReference type="PDBsum" id="8OIR"/>
<dbReference type="PDBsum" id="8OIS"/>
<dbReference type="PDBsum" id="8OIT"/>
<dbReference type="EMDB" id="EMD-16894"/>
<dbReference type="EMDB" id="EMD-16895"/>
<dbReference type="EMDB" id="EMD-16896"/>
<dbReference type="EMDB" id="EMD-16897"/>
<dbReference type="EMDB" id="EMD-16898"/>
<dbReference type="EMDB" id="EMD-16899"/>
<dbReference type="SMR" id="O75570"/>
<dbReference type="BioGRID" id="114978">
    <property type="interactions" value="244"/>
</dbReference>
<dbReference type="FunCoup" id="O75570">
    <property type="interactions" value="1407"/>
</dbReference>
<dbReference type="IntAct" id="O75570">
    <property type="interactions" value="23"/>
</dbReference>
<dbReference type="STRING" id="9606.ENSP00000368793"/>
<dbReference type="GlyGen" id="O75570">
    <property type="glycosylation" value="1 site, 1 O-linked glycan (1 site)"/>
</dbReference>
<dbReference type="iPTMnet" id="O75570"/>
<dbReference type="PhosphoSitePlus" id="O75570"/>
<dbReference type="SwissPalm" id="O75570"/>
<dbReference type="BioMuta" id="MTRF1"/>
<dbReference type="jPOST" id="O75570"/>
<dbReference type="MassIVE" id="O75570"/>
<dbReference type="PaxDb" id="9606-ENSP00000368793"/>
<dbReference type="PeptideAtlas" id="O75570"/>
<dbReference type="ProteomicsDB" id="4093"/>
<dbReference type="ProteomicsDB" id="50091">
    <molecule id="O75570-1"/>
</dbReference>
<dbReference type="Pumba" id="O75570"/>
<dbReference type="Antibodypedia" id="23394">
    <property type="antibodies" value="163 antibodies from 21 providers"/>
</dbReference>
<dbReference type="DNASU" id="9617"/>
<dbReference type="Ensembl" id="ENST00000379477.5">
    <molecule id="O75570-1"/>
    <property type="protein sequence ID" value="ENSP00000368790.1"/>
    <property type="gene ID" value="ENSG00000120662.16"/>
</dbReference>
<dbReference type="Ensembl" id="ENST00000379480.9">
    <molecule id="O75570-1"/>
    <property type="protein sequence ID" value="ENSP00000368793.3"/>
    <property type="gene ID" value="ENSG00000120662.16"/>
</dbReference>
<dbReference type="GeneID" id="9617"/>
<dbReference type="KEGG" id="hsa:9617"/>
<dbReference type="MANE-Select" id="ENST00000379480.9">
    <property type="protein sequence ID" value="ENSP00000368793.3"/>
    <property type="RefSeq nucleotide sequence ID" value="NM_004294.4"/>
    <property type="RefSeq protein sequence ID" value="NP_004285.2"/>
</dbReference>
<dbReference type="UCSC" id="uc001uxx.4">
    <molecule id="O75570-1"/>
    <property type="organism name" value="human"/>
</dbReference>
<dbReference type="AGR" id="HGNC:7469"/>
<dbReference type="CTD" id="9617"/>
<dbReference type="DisGeNET" id="9617"/>
<dbReference type="GeneCards" id="MTRF1"/>
<dbReference type="HGNC" id="HGNC:7469">
    <property type="gene designation" value="MTRF1"/>
</dbReference>
<dbReference type="HPA" id="ENSG00000120662">
    <property type="expression patterns" value="Low tissue specificity"/>
</dbReference>
<dbReference type="MIM" id="604601">
    <property type="type" value="gene"/>
</dbReference>
<dbReference type="neXtProt" id="NX_O75570"/>
<dbReference type="OpenTargets" id="ENSG00000120662"/>
<dbReference type="PharmGKB" id="PA31273"/>
<dbReference type="VEuPathDB" id="HostDB:ENSG00000120662"/>
<dbReference type="eggNOG" id="KOG2726">
    <property type="taxonomic scope" value="Eukaryota"/>
</dbReference>
<dbReference type="GeneTree" id="ENSGT00940000156877"/>
<dbReference type="HOGENOM" id="CLU_036856_0_3_1"/>
<dbReference type="InParanoid" id="O75570"/>
<dbReference type="OMA" id="ECQQSRS"/>
<dbReference type="OrthoDB" id="2019491at2759"/>
<dbReference type="PAN-GO" id="O75570">
    <property type="GO annotations" value="2 GO annotations based on evolutionary models"/>
</dbReference>
<dbReference type="PhylomeDB" id="O75570"/>
<dbReference type="TreeFam" id="TF313720"/>
<dbReference type="PathwayCommons" id="O75570"/>
<dbReference type="SignaLink" id="O75570"/>
<dbReference type="BioGRID-ORCS" id="9617">
    <property type="hits" value="47 hits in 1159 CRISPR screens"/>
</dbReference>
<dbReference type="ChiTaRS" id="MTRF1">
    <property type="organism name" value="human"/>
</dbReference>
<dbReference type="GeneWiki" id="MTRF1"/>
<dbReference type="GenomeRNAi" id="9617"/>
<dbReference type="Pharos" id="O75570">
    <property type="development level" value="Tbio"/>
</dbReference>
<dbReference type="PRO" id="PR:O75570"/>
<dbReference type="Proteomes" id="UP000005640">
    <property type="component" value="Chromosome 13"/>
</dbReference>
<dbReference type="RNAct" id="O75570">
    <property type="molecule type" value="protein"/>
</dbReference>
<dbReference type="Bgee" id="ENSG00000120662">
    <property type="expression patterns" value="Expressed in body of pancreas and 188 other cell types or tissues"/>
</dbReference>
<dbReference type="ExpressionAtlas" id="O75570">
    <property type="expression patterns" value="baseline and differential"/>
</dbReference>
<dbReference type="GO" id="GO:0005739">
    <property type="term" value="C:mitochondrion"/>
    <property type="evidence" value="ECO:0000314"/>
    <property type="project" value="UniProtKB"/>
</dbReference>
<dbReference type="GO" id="GO:0003747">
    <property type="term" value="F:translation release factor activity"/>
    <property type="evidence" value="ECO:0000304"/>
    <property type="project" value="ProtInc"/>
</dbReference>
<dbReference type="GO" id="GO:0016149">
    <property type="term" value="F:translation release factor activity, codon specific"/>
    <property type="evidence" value="ECO:0000314"/>
    <property type="project" value="UniProtKB"/>
</dbReference>
<dbReference type="GO" id="GO:0070126">
    <property type="term" value="P:mitochondrial translational termination"/>
    <property type="evidence" value="ECO:0000314"/>
    <property type="project" value="UniProtKB"/>
</dbReference>
<dbReference type="FunFam" id="3.30.160.20:FF:000004">
    <property type="entry name" value="Peptide chain release factor 1"/>
    <property type="match status" value="1"/>
</dbReference>
<dbReference type="FunFam" id="3.30.70.1660:FF:000004">
    <property type="entry name" value="Peptide chain release factor 1"/>
    <property type="match status" value="1"/>
</dbReference>
<dbReference type="FunFam" id="3.30.70.1660:FF:000017">
    <property type="entry name" value="Peptide chain release factor 1, mitochondrial"/>
    <property type="match status" value="1"/>
</dbReference>
<dbReference type="Gene3D" id="3.30.160.20">
    <property type="match status" value="1"/>
</dbReference>
<dbReference type="Gene3D" id="3.30.70.1660">
    <property type="match status" value="2"/>
</dbReference>
<dbReference type="Gene3D" id="6.10.140.1950">
    <property type="match status" value="1"/>
</dbReference>
<dbReference type="InterPro" id="IPR005139">
    <property type="entry name" value="PCRF"/>
</dbReference>
<dbReference type="InterPro" id="IPR000352">
    <property type="entry name" value="Pep_chain_release_fac_I"/>
</dbReference>
<dbReference type="InterPro" id="IPR045853">
    <property type="entry name" value="Pep_chain_release_fac_I_sf"/>
</dbReference>
<dbReference type="InterPro" id="IPR050057">
    <property type="entry name" value="Prokaryotic/Mito_RF"/>
</dbReference>
<dbReference type="PANTHER" id="PTHR43804">
    <property type="entry name" value="LD18447P"/>
    <property type="match status" value="1"/>
</dbReference>
<dbReference type="PANTHER" id="PTHR43804:SF1">
    <property type="entry name" value="PEPTIDE CHAIN RELEASE FACTOR 1, MITOCHONDRIAL"/>
    <property type="match status" value="1"/>
</dbReference>
<dbReference type="Pfam" id="PF03462">
    <property type="entry name" value="PCRF"/>
    <property type="match status" value="1"/>
</dbReference>
<dbReference type="Pfam" id="PF00472">
    <property type="entry name" value="RF-1"/>
    <property type="match status" value="1"/>
</dbReference>
<dbReference type="SMART" id="SM00937">
    <property type="entry name" value="PCRF"/>
    <property type="match status" value="1"/>
</dbReference>
<dbReference type="SUPFAM" id="SSF75620">
    <property type="entry name" value="Release factor"/>
    <property type="match status" value="1"/>
</dbReference>
<dbReference type="PROSITE" id="PS00745">
    <property type="entry name" value="RF_PROK_I"/>
    <property type="match status" value="1"/>
</dbReference>
<protein>
    <recommendedName>
        <fullName evidence="13">Peptide chain release factor 1, mitochondrial</fullName>
        <shortName>MRF-1</shortName>
        <shortName evidence="10 11 12">MtRF-1</shortName>
    </recommendedName>
</protein>